<protein>
    <recommendedName>
        <fullName evidence="1">Phosphopantetheine adenylyltransferase</fullName>
        <ecNumber evidence="1">2.7.7.3</ecNumber>
    </recommendedName>
    <alternativeName>
        <fullName evidence="1">Dephospho-CoA pyrophosphorylase</fullName>
    </alternativeName>
    <alternativeName>
        <fullName evidence="1">Pantetheine-phosphate adenylyltransferase</fullName>
        <shortName evidence="1">PPAT</shortName>
    </alternativeName>
</protein>
<keyword id="KW-0067">ATP-binding</keyword>
<keyword id="KW-0173">Coenzyme A biosynthesis</keyword>
<keyword id="KW-0963">Cytoplasm</keyword>
<keyword id="KW-0460">Magnesium</keyword>
<keyword id="KW-0547">Nucleotide-binding</keyword>
<keyword id="KW-0548">Nucleotidyltransferase</keyword>
<keyword id="KW-0808">Transferase</keyword>
<gene>
    <name evidence="1" type="primary">coaD</name>
    <name type="ordered locus">Mvan_2167</name>
</gene>
<dbReference type="EC" id="2.7.7.3" evidence="1"/>
<dbReference type="EMBL" id="CP000511">
    <property type="protein sequence ID" value="ABM12982.1"/>
    <property type="molecule type" value="Genomic_DNA"/>
</dbReference>
<dbReference type="RefSeq" id="WP_011779396.1">
    <property type="nucleotide sequence ID" value="NZ_JACKSD010000001.1"/>
</dbReference>
<dbReference type="SMR" id="A1T732"/>
<dbReference type="STRING" id="350058.Mvan_2167"/>
<dbReference type="KEGG" id="mva:Mvan_2167"/>
<dbReference type="eggNOG" id="COG0669">
    <property type="taxonomic scope" value="Bacteria"/>
</dbReference>
<dbReference type="HOGENOM" id="CLU_100149_1_0_11"/>
<dbReference type="UniPathway" id="UPA00241">
    <property type="reaction ID" value="UER00355"/>
</dbReference>
<dbReference type="Proteomes" id="UP000009159">
    <property type="component" value="Chromosome"/>
</dbReference>
<dbReference type="GO" id="GO:0005737">
    <property type="term" value="C:cytoplasm"/>
    <property type="evidence" value="ECO:0007669"/>
    <property type="project" value="UniProtKB-SubCell"/>
</dbReference>
<dbReference type="GO" id="GO:0005524">
    <property type="term" value="F:ATP binding"/>
    <property type="evidence" value="ECO:0007669"/>
    <property type="project" value="UniProtKB-KW"/>
</dbReference>
<dbReference type="GO" id="GO:0004595">
    <property type="term" value="F:pantetheine-phosphate adenylyltransferase activity"/>
    <property type="evidence" value="ECO:0007669"/>
    <property type="project" value="UniProtKB-UniRule"/>
</dbReference>
<dbReference type="GO" id="GO:0015937">
    <property type="term" value="P:coenzyme A biosynthetic process"/>
    <property type="evidence" value="ECO:0007669"/>
    <property type="project" value="UniProtKB-UniRule"/>
</dbReference>
<dbReference type="CDD" id="cd02163">
    <property type="entry name" value="PPAT"/>
    <property type="match status" value="1"/>
</dbReference>
<dbReference type="FunFam" id="3.40.50.620:FF:000012">
    <property type="entry name" value="Phosphopantetheine adenylyltransferase"/>
    <property type="match status" value="1"/>
</dbReference>
<dbReference type="Gene3D" id="3.40.50.620">
    <property type="entry name" value="HUPs"/>
    <property type="match status" value="1"/>
</dbReference>
<dbReference type="HAMAP" id="MF_00151">
    <property type="entry name" value="PPAT_bact"/>
    <property type="match status" value="1"/>
</dbReference>
<dbReference type="InterPro" id="IPR004821">
    <property type="entry name" value="Cyt_trans-like"/>
</dbReference>
<dbReference type="InterPro" id="IPR001980">
    <property type="entry name" value="PPAT"/>
</dbReference>
<dbReference type="InterPro" id="IPR014729">
    <property type="entry name" value="Rossmann-like_a/b/a_fold"/>
</dbReference>
<dbReference type="NCBIfam" id="TIGR01510">
    <property type="entry name" value="coaD_prev_kdtB"/>
    <property type="match status" value="1"/>
</dbReference>
<dbReference type="NCBIfam" id="TIGR00125">
    <property type="entry name" value="cyt_tran_rel"/>
    <property type="match status" value="1"/>
</dbReference>
<dbReference type="PANTHER" id="PTHR21342">
    <property type="entry name" value="PHOSPHOPANTETHEINE ADENYLYLTRANSFERASE"/>
    <property type="match status" value="1"/>
</dbReference>
<dbReference type="PANTHER" id="PTHR21342:SF1">
    <property type="entry name" value="PHOSPHOPANTETHEINE ADENYLYLTRANSFERASE"/>
    <property type="match status" value="1"/>
</dbReference>
<dbReference type="Pfam" id="PF01467">
    <property type="entry name" value="CTP_transf_like"/>
    <property type="match status" value="1"/>
</dbReference>
<dbReference type="PRINTS" id="PR01020">
    <property type="entry name" value="LPSBIOSNTHSS"/>
</dbReference>
<dbReference type="SUPFAM" id="SSF52374">
    <property type="entry name" value="Nucleotidylyl transferase"/>
    <property type="match status" value="1"/>
</dbReference>
<reference key="1">
    <citation type="submission" date="2006-12" db="EMBL/GenBank/DDBJ databases">
        <title>Complete sequence of Mycobacterium vanbaalenii PYR-1.</title>
        <authorList>
            <consortium name="US DOE Joint Genome Institute"/>
            <person name="Copeland A."/>
            <person name="Lucas S."/>
            <person name="Lapidus A."/>
            <person name="Barry K."/>
            <person name="Detter J.C."/>
            <person name="Glavina del Rio T."/>
            <person name="Hammon N."/>
            <person name="Israni S."/>
            <person name="Dalin E."/>
            <person name="Tice H."/>
            <person name="Pitluck S."/>
            <person name="Singan V."/>
            <person name="Schmutz J."/>
            <person name="Larimer F."/>
            <person name="Land M."/>
            <person name="Hauser L."/>
            <person name="Kyrpides N."/>
            <person name="Anderson I.J."/>
            <person name="Miller C."/>
            <person name="Richardson P."/>
        </authorList>
    </citation>
    <scope>NUCLEOTIDE SEQUENCE [LARGE SCALE GENOMIC DNA]</scope>
    <source>
        <strain>DSM 7251 / JCM 13017 / BCRC 16820 / KCTC 9966 / NRRL B-24157 / PYR-1</strain>
    </source>
</reference>
<feature type="chain" id="PRO_1000011184" description="Phosphopantetheine adenylyltransferase">
    <location>
        <begin position="1"/>
        <end position="160"/>
    </location>
</feature>
<feature type="binding site" evidence="1">
    <location>
        <begin position="9"/>
        <end position="10"/>
    </location>
    <ligand>
        <name>ATP</name>
        <dbReference type="ChEBI" id="CHEBI:30616"/>
    </ligand>
</feature>
<feature type="binding site" evidence="1">
    <location>
        <position position="9"/>
    </location>
    <ligand>
        <name>substrate</name>
    </ligand>
</feature>
<feature type="binding site" evidence="1">
    <location>
        <position position="17"/>
    </location>
    <ligand>
        <name>ATP</name>
        <dbReference type="ChEBI" id="CHEBI:30616"/>
    </ligand>
</feature>
<feature type="binding site" evidence="1">
    <location>
        <position position="41"/>
    </location>
    <ligand>
        <name>substrate</name>
    </ligand>
</feature>
<feature type="binding site" evidence="1">
    <location>
        <position position="73"/>
    </location>
    <ligand>
        <name>substrate</name>
    </ligand>
</feature>
<feature type="binding site" evidence="1">
    <location>
        <position position="87"/>
    </location>
    <ligand>
        <name>substrate</name>
    </ligand>
</feature>
<feature type="binding site" evidence="1">
    <location>
        <begin position="88"/>
        <end position="90"/>
    </location>
    <ligand>
        <name>ATP</name>
        <dbReference type="ChEBI" id="CHEBI:30616"/>
    </ligand>
</feature>
<feature type="binding site" evidence="1">
    <location>
        <position position="98"/>
    </location>
    <ligand>
        <name>ATP</name>
        <dbReference type="ChEBI" id="CHEBI:30616"/>
    </ligand>
</feature>
<feature type="binding site" evidence="1">
    <location>
        <begin position="122"/>
        <end position="128"/>
    </location>
    <ligand>
        <name>ATP</name>
        <dbReference type="ChEBI" id="CHEBI:30616"/>
    </ligand>
</feature>
<feature type="site" description="Transition state stabilizer" evidence="1">
    <location>
        <position position="17"/>
    </location>
</feature>
<organism>
    <name type="scientific">Mycolicibacterium vanbaalenii (strain DSM 7251 / JCM 13017 / BCRC 16820 / KCTC 9966 / NRRL B-24157 / PYR-1)</name>
    <name type="common">Mycobacterium vanbaalenii</name>
    <dbReference type="NCBI Taxonomy" id="350058"/>
    <lineage>
        <taxon>Bacteria</taxon>
        <taxon>Bacillati</taxon>
        <taxon>Actinomycetota</taxon>
        <taxon>Actinomycetes</taxon>
        <taxon>Mycobacteriales</taxon>
        <taxon>Mycobacteriaceae</taxon>
        <taxon>Mycolicibacterium</taxon>
    </lineage>
</organism>
<proteinExistence type="inferred from homology"/>
<evidence type="ECO:0000255" key="1">
    <source>
        <dbReference type="HAMAP-Rule" id="MF_00151"/>
    </source>
</evidence>
<name>COAD_MYCVP</name>
<comment type="function">
    <text evidence="1">Reversibly transfers an adenylyl group from ATP to 4'-phosphopantetheine, yielding dephospho-CoA (dPCoA) and pyrophosphate.</text>
</comment>
<comment type="catalytic activity">
    <reaction evidence="1">
        <text>(R)-4'-phosphopantetheine + ATP + H(+) = 3'-dephospho-CoA + diphosphate</text>
        <dbReference type="Rhea" id="RHEA:19801"/>
        <dbReference type="ChEBI" id="CHEBI:15378"/>
        <dbReference type="ChEBI" id="CHEBI:30616"/>
        <dbReference type="ChEBI" id="CHEBI:33019"/>
        <dbReference type="ChEBI" id="CHEBI:57328"/>
        <dbReference type="ChEBI" id="CHEBI:61723"/>
        <dbReference type="EC" id="2.7.7.3"/>
    </reaction>
</comment>
<comment type="cofactor">
    <cofactor evidence="1">
        <name>Mg(2+)</name>
        <dbReference type="ChEBI" id="CHEBI:18420"/>
    </cofactor>
</comment>
<comment type="pathway">
    <text evidence="1">Cofactor biosynthesis; coenzyme A biosynthesis; CoA from (R)-pantothenate: step 4/5.</text>
</comment>
<comment type="subunit">
    <text evidence="1">Homohexamer.</text>
</comment>
<comment type="subcellular location">
    <subcellularLocation>
        <location evidence="1">Cytoplasm</location>
    </subcellularLocation>
</comment>
<comment type="similarity">
    <text evidence="1">Belongs to the bacterial CoaD family.</text>
</comment>
<sequence>MSGAVCPGSFDPVTLGHIDIFERAAAQFDEVVVAVMVNPNKTGMFTHEERIALIEESTTHLPNLRVESGQGLIVDFVKARGLTAIVKGLRTGTDFEYELQMAQMNNHIAGVDTFFIATTPRYSFVSSSLAKEVATLGGDVSELLPAPVNARLKAKLAARD</sequence>
<accession>A1T732</accession>